<comment type="function">
    <text evidence="1">Bifunctional enzyme which can phosphorylate or dephosphorylate isocitrate dehydrogenase (IDH) on a specific serine residue. This is a regulatory mechanism which enables bacteria to bypass the Krebs cycle via the glyoxylate shunt in response to the source of carbon. When bacteria are grown on glucose, IDH is fully active and unphosphorylated, but when grown on acetate or ethanol, the activity of IDH declines drastically concomitant with its phosphorylation.</text>
</comment>
<comment type="catalytic activity">
    <reaction evidence="1">
        <text>L-seryl-[isocitrate dehydrogenase] + ATP = O-phospho-L-seryl-[isocitrate dehydrogenase] + ADP + H(+)</text>
        <dbReference type="Rhea" id="RHEA:43540"/>
        <dbReference type="Rhea" id="RHEA-COMP:10605"/>
        <dbReference type="Rhea" id="RHEA-COMP:10606"/>
        <dbReference type="ChEBI" id="CHEBI:15378"/>
        <dbReference type="ChEBI" id="CHEBI:29999"/>
        <dbReference type="ChEBI" id="CHEBI:30616"/>
        <dbReference type="ChEBI" id="CHEBI:83421"/>
        <dbReference type="ChEBI" id="CHEBI:456216"/>
        <dbReference type="EC" id="2.7.11.5"/>
    </reaction>
</comment>
<comment type="subcellular location">
    <subcellularLocation>
        <location evidence="1">Cytoplasm</location>
    </subcellularLocation>
</comment>
<comment type="similarity">
    <text evidence="1">Belongs to the AceK family.</text>
</comment>
<feature type="chain" id="PRO_0000259152" description="Isocitrate dehydrogenase kinase/phosphatase">
    <location>
        <begin position="1"/>
        <end position="625"/>
    </location>
</feature>
<feature type="region of interest" description="Disordered" evidence="2">
    <location>
        <begin position="596"/>
        <end position="625"/>
    </location>
</feature>
<feature type="active site" evidence="1">
    <location>
        <position position="381"/>
    </location>
</feature>
<feature type="binding site" evidence="1">
    <location>
        <begin position="325"/>
        <end position="331"/>
    </location>
    <ligand>
        <name>ATP</name>
        <dbReference type="ChEBI" id="CHEBI:30616"/>
    </ligand>
</feature>
<feature type="binding site" evidence="1">
    <location>
        <position position="346"/>
    </location>
    <ligand>
        <name>ATP</name>
        <dbReference type="ChEBI" id="CHEBI:30616"/>
    </ligand>
</feature>
<protein>
    <recommendedName>
        <fullName evidence="1">Isocitrate dehydrogenase kinase/phosphatase</fullName>
        <shortName evidence="1">IDH kinase/phosphatase</shortName>
        <shortName evidence="1">IDHK/P</shortName>
        <ecNumber evidence="1">2.7.11.5</ecNumber>
        <ecNumber evidence="1">3.1.3.-</ecNumber>
    </recommendedName>
</protein>
<evidence type="ECO:0000255" key="1">
    <source>
        <dbReference type="HAMAP-Rule" id="MF_00747"/>
    </source>
</evidence>
<evidence type="ECO:0000256" key="2">
    <source>
        <dbReference type="SAM" id="MobiDB-lite"/>
    </source>
</evidence>
<dbReference type="EC" id="2.7.11.5" evidence="1"/>
<dbReference type="EC" id="3.1.3.-" evidence="1"/>
<dbReference type="EMBL" id="CP000316">
    <property type="protein sequence ID" value="ABE46080.1"/>
    <property type="molecule type" value="Genomic_DNA"/>
</dbReference>
<dbReference type="RefSeq" id="WP_011485069.1">
    <property type="nucleotide sequence ID" value="NC_007948.1"/>
</dbReference>
<dbReference type="SMR" id="Q124G2"/>
<dbReference type="STRING" id="296591.Bpro_4188"/>
<dbReference type="KEGG" id="pol:Bpro_4188"/>
<dbReference type="eggNOG" id="COG4579">
    <property type="taxonomic scope" value="Bacteria"/>
</dbReference>
<dbReference type="HOGENOM" id="CLU_033804_1_1_4"/>
<dbReference type="OrthoDB" id="5287793at2"/>
<dbReference type="Proteomes" id="UP000001983">
    <property type="component" value="Chromosome"/>
</dbReference>
<dbReference type="GO" id="GO:0005737">
    <property type="term" value="C:cytoplasm"/>
    <property type="evidence" value="ECO:0007669"/>
    <property type="project" value="UniProtKB-SubCell"/>
</dbReference>
<dbReference type="GO" id="GO:0008772">
    <property type="term" value="F:[isocitrate dehydrogenase (NADP+)] kinase activity"/>
    <property type="evidence" value="ECO:0007669"/>
    <property type="project" value="UniProtKB-UniRule"/>
</dbReference>
<dbReference type="GO" id="GO:0016208">
    <property type="term" value="F:AMP binding"/>
    <property type="evidence" value="ECO:0007669"/>
    <property type="project" value="TreeGrafter"/>
</dbReference>
<dbReference type="GO" id="GO:0005524">
    <property type="term" value="F:ATP binding"/>
    <property type="evidence" value="ECO:0007669"/>
    <property type="project" value="UniProtKB-UniRule"/>
</dbReference>
<dbReference type="GO" id="GO:0004721">
    <property type="term" value="F:phosphoprotein phosphatase activity"/>
    <property type="evidence" value="ECO:0007669"/>
    <property type="project" value="UniProtKB-KW"/>
</dbReference>
<dbReference type="GO" id="GO:0004674">
    <property type="term" value="F:protein serine/threonine kinase activity"/>
    <property type="evidence" value="ECO:0007669"/>
    <property type="project" value="UniProtKB-KW"/>
</dbReference>
<dbReference type="GO" id="GO:0006006">
    <property type="term" value="P:glucose metabolic process"/>
    <property type="evidence" value="ECO:0007669"/>
    <property type="project" value="InterPro"/>
</dbReference>
<dbReference type="GO" id="GO:0006097">
    <property type="term" value="P:glyoxylate cycle"/>
    <property type="evidence" value="ECO:0007669"/>
    <property type="project" value="UniProtKB-UniRule"/>
</dbReference>
<dbReference type="GO" id="GO:0006099">
    <property type="term" value="P:tricarboxylic acid cycle"/>
    <property type="evidence" value="ECO:0007669"/>
    <property type="project" value="UniProtKB-UniRule"/>
</dbReference>
<dbReference type="HAMAP" id="MF_00747">
    <property type="entry name" value="AceK"/>
    <property type="match status" value="1"/>
</dbReference>
<dbReference type="InterPro" id="IPR046855">
    <property type="entry name" value="AceK_kinase"/>
</dbReference>
<dbReference type="InterPro" id="IPR046854">
    <property type="entry name" value="AceK_regulatory"/>
</dbReference>
<dbReference type="InterPro" id="IPR010452">
    <property type="entry name" value="Isocitrate_DH_AceK"/>
</dbReference>
<dbReference type="NCBIfam" id="NF002804">
    <property type="entry name" value="PRK02946.1"/>
    <property type="match status" value="1"/>
</dbReference>
<dbReference type="PANTHER" id="PTHR39559">
    <property type="match status" value="1"/>
</dbReference>
<dbReference type="PANTHER" id="PTHR39559:SF1">
    <property type="entry name" value="ISOCITRATE DEHYDROGENASE KINASE_PHOSPHATASE"/>
    <property type="match status" value="1"/>
</dbReference>
<dbReference type="Pfam" id="PF06315">
    <property type="entry name" value="AceK_kinase"/>
    <property type="match status" value="1"/>
</dbReference>
<dbReference type="Pfam" id="PF20423">
    <property type="entry name" value="AceK_regulatory"/>
    <property type="match status" value="1"/>
</dbReference>
<dbReference type="PIRSF" id="PIRSF000719">
    <property type="entry name" value="AceK"/>
    <property type="match status" value="1"/>
</dbReference>
<sequence>MFPQRLDSTIAYDIAKAMMDGFNRHYQLFRTESARAKHRFETADWHGQQRAQRERIEFYDLRVREASTRLEREFKAGEQSMDVWHQVKLHYIGLLVNHHQPELAETFFNSVTTKILHRSYFQNDFIFVRPAVSTEYIENEEPTAQPTYRAYYPTRDNLREIIVRLVRDFDLRLEFEDLERDAGYVLEAVSERLSDVKLRANFQIQVLSGLFFRNKGAYVVGKIINGFNEVPLALPILHSKSGKLVIDAALFGEDDLLILFSFARAYFMVDMGIPSAYVQFLRSMMPHMPRAEIYNALGLAKQGKTLFYRDFLHHLRHSTDKFRIAPGIKGMVMLVFDLPSFPYVFKVIKDYYPPQKDTSREQIKGKYLLVKQHDRVGRMADTQEYSEVAFPRARFDDELIAEIEKFAPSQLEISDRDRDGNTEVIIKHVYIERRMIPLNIYLQEAFDAGVGEPAAKNQIERAVVEYGNAIKDLVAANIFPGDMLWKNFGITRHGKVVFYDYDEIEYITDCKFRRVPAPRNDEEEMSGEVWYSVGPKDVFPETFAPFLLGNDAVREVFMKHHGDLLDAEFWQSHQARIQAGHVHDVFPYEREKRFTRRHSPGRNDHELLTHLPPEPMLTGLSGMTP</sequence>
<reference key="1">
    <citation type="journal article" date="2008" name="Appl. Environ. Microbiol.">
        <title>The genome of Polaromonas sp. strain JS666: insights into the evolution of a hydrocarbon- and xenobiotic-degrading bacterium, and features of relevance to biotechnology.</title>
        <authorList>
            <person name="Mattes T.E."/>
            <person name="Alexander A.K."/>
            <person name="Richardson P.M."/>
            <person name="Munk A.C."/>
            <person name="Han C.S."/>
            <person name="Stothard P."/>
            <person name="Coleman N.V."/>
        </authorList>
    </citation>
    <scope>NUCLEOTIDE SEQUENCE [LARGE SCALE GENOMIC DNA]</scope>
    <source>
        <strain>JS666 / ATCC BAA-500</strain>
    </source>
</reference>
<proteinExistence type="inferred from homology"/>
<name>ACEK_POLSJ</name>
<gene>
    <name evidence="1" type="primary">aceK</name>
    <name type="ordered locus">Bpro_4188</name>
</gene>
<keyword id="KW-0067">ATP-binding</keyword>
<keyword id="KW-0963">Cytoplasm</keyword>
<keyword id="KW-0329">Glyoxylate bypass</keyword>
<keyword id="KW-0378">Hydrolase</keyword>
<keyword id="KW-0418">Kinase</keyword>
<keyword id="KW-0547">Nucleotide-binding</keyword>
<keyword id="KW-0904">Protein phosphatase</keyword>
<keyword id="KW-1185">Reference proteome</keyword>
<keyword id="KW-0723">Serine/threonine-protein kinase</keyword>
<keyword id="KW-0808">Transferase</keyword>
<keyword id="KW-0816">Tricarboxylic acid cycle</keyword>
<organism>
    <name type="scientific">Polaromonas sp. (strain JS666 / ATCC BAA-500)</name>
    <dbReference type="NCBI Taxonomy" id="296591"/>
    <lineage>
        <taxon>Bacteria</taxon>
        <taxon>Pseudomonadati</taxon>
        <taxon>Pseudomonadota</taxon>
        <taxon>Betaproteobacteria</taxon>
        <taxon>Burkholderiales</taxon>
        <taxon>Comamonadaceae</taxon>
        <taxon>Polaromonas</taxon>
    </lineage>
</organism>
<accession>Q124G2</accession>